<accession>Q9AXU3</accession>
<gene>
    <name evidence="6" type="primary">SPA15</name>
</gene>
<keyword id="KW-0150">Chloroplast</keyword>
<keyword id="KW-0934">Plastid</keyword>
<keyword id="KW-0809">Transit peptide</keyword>
<comment type="function">
    <text evidence="8">May be involved in the regulation of leaf senescence.</text>
</comment>
<comment type="subcellular location">
    <subcellularLocation>
        <location evidence="5">Plastid</location>
        <location evidence="5">Chloroplast</location>
    </subcellularLocation>
</comment>
<comment type="tissue specificity">
    <text evidence="3 4">Expressed in leaves.</text>
</comment>
<comment type="developmental stage">
    <text evidence="3 4">Up-regulated during leaf senescence.</text>
</comment>
<comment type="induction">
    <text evidence="4">Induced by abscisic acid (ABA), salicylate (SA), methyl jasmonate (MeJA) and ethylene.</text>
</comment>
<comment type="similarity">
    <text>Belongs to the ATA15/OSA15 family.</text>
</comment>
<evidence type="ECO:0000255" key="1"/>
<evidence type="ECO:0000256" key="2">
    <source>
        <dbReference type="SAM" id="MobiDB-lite"/>
    </source>
</evidence>
<evidence type="ECO:0000269" key="3">
    <source>
    </source>
</evidence>
<evidence type="ECO:0000269" key="4">
    <source>
    </source>
</evidence>
<evidence type="ECO:0000269" key="5">
    <source>
    </source>
</evidence>
<evidence type="ECO:0000303" key="6">
    <source>
    </source>
</evidence>
<evidence type="ECO:0000305" key="7"/>
<evidence type="ECO:0000305" key="8">
    <source>
    </source>
</evidence>
<sequence length="420" mass="46583">MAKPNGIIYSSPKSPQHPKIYAKTQVIEHSTQSNGYLSMLRLKLSNKGFWRAYRAPSGYIATRGSSLRCHSAETRHAETEECVREYRDSSDTSSMQGKDKDPASLGKSGTPSPGLAEACKFVYNDAKFVNERAKNDIVLLSRGIMRLDARARQDVAFLGSEFLKLDARAREHTEKIDNDVKRKAERLHHVATILKNKAQSRLKNAADRHWSDGALEADLRRADFAAKQRAMEDALMALEFVKNIHDMMVSKMCNLKRSSLNPNKMTERITLEKNGKMLNFLPGEVSAERISAIQEAYWDIAAALSEADGIDYTDPEELELLVATLIDLDAMDGKSSVSLLAECSSSPDVNTRKALANALSAAPSMWTLGNAGMGALQRLAEDTTLNRCCCIENHQRIEEAVGNRGGGQLEVHGERKITRR</sequence>
<feature type="transit peptide" description="Chloroplast" evidence="1">
    <location>
        <begin position="1"/>
        <end position="68"/>
    </location>
</feature>
<feature type="chain" id="PRO_0000443064" description="Senescence-associated protein SPA15, chloroplastic">
    <location>
        <begin position="69"/>
        <end position="420"/>
    </location>
</feature>
<feature type="region of interest" description="Disordered" evidence="2">
    <location>
        <begin position="85"/>
        <end position="111"/>
    </location>
</feature>
<organism>
    <name type="scientific">Ipomoea batatas</name>
    <name type="common">Sweet potato</name>
    <name type="synonym">Convolvulus batatas</name>
    <dbReference type="NCBI Taxonomy" id="4120"/>
    <lineage>
        <taxon>Eukaryota</taxon>
        <taxon>Viridiplantae</taxon>
        <taxon>Streptophyta</taxon>
        <taxon>Embryophyta</taxon>
        <taxon>Tracheophyta</taxon>
        <taxon>Spermatophyta</taxon>
        <taxon>Magnoliopsida</taxon>
        <taxon>eudicotyledons</taxon>
        <taxon>Gunneridae</taxon>
        <taxon>Pentapetalae</taxon>
        <taxon>asterids</taxon>
        <taxon>lamiids</taxon>
        <taxon>Solanales</taxon>
        <taxon>Convolvulaceae</taxon>
        <taxon>Ipomoeeae</taxon>
        <taxon>Ipomoea</taxon>
    </lineage>
</organism>
<reference key="1">
    <citation type="journal article" date="2001" name="Physiol. Plantarum">
        <title>Cloning and characterization of leaf senescence up-regulated genes in sweet potato.</title>
        <authorList>
            <person name="Huang Y.-J."/>
            <person name="To K.-Y."/>
            <person name="Yap M.-N."/>
            <person name="Suen D.-F."/>
            <person name="Chen S.-C.G."/>
        </authorList>
    </citation>
    <scope>NUCLEOTIDE SEQUENCE [GENOMIC DNA / MRNA]</scope>
    <scope>TISSUE SPECIFICITY</scope>
    <scope>DEVELOPMENTAL STAGE</scope>
    <source>
        <strain>cv. Tainong 57</strain>
        <tissue>Leaf</tissue>
    </source>
</reference>
<reference key="2">
    <citation type="journal article" date="2003" name="Plant Mol. Biol.">
        <title>Molecular characterization of a novel senescence-associated gene SPA15 induced during leaf senescence in sweet potato.</title>
        <authorList>
            <person name="Yap M.N."/>
            <person name="Lee R.H."/>
            <person name="Huang Y.J."/>
            <person name="Liao C.J."/>
            <person name="Chen S.C."/>
        </authorList>
    </citation>
    <scope>FUNCTION</scope>
    <scope>TISSUE SPECIFICITY</scope>
    <scope>DEVELOPMENTAL STAGE</scope>
    <scope>INDUCTION</scope>
</reference>
<reference key="3">
    <citation type="journal article" date="2012" name="J. Exp. Bot.">
        <title>Role of ARABIDOPSIS A-FIFTEEN in regulating leaf senescence involves response to reactive oxygen species and is dependent on ETHYLENE INSENSITIVE2.</title>
        <authorList>
            <person name="Chen G.H."/>
            <person name="Liu C.P."/>
            <person name="Chen S.C."/>
            <person name="Wang L.C."/>
        </authorList>
    </citation>
    <scope>SUBCELLULAR LOCATION</scope>
</reference>
<protein>
    <recommendedName>
        <fullName evidence="7">Senescence-associated protein SPA15, chloroplastic</fullName>
    </recommendedName>
</protein>
<name>SPA15_IPOBA</name>
<dbReference type="EMBL" id="AF234536">
    <property type="protein sequence ID" value="AAK08655.1"/>
    <property type="molecule type" value="mRNA"/>
</dbReference>
<dbReference type="EMBL" id="AF353614">
    <property type="protein sequence ID" value="AAQ15125.1"/>
    <property type="molecule type" value="Genomic_DNA"/>
</dbReference>
<dbReference type="SMR" id="Q9AXU3"/>
<dbReference type="GO" id="GO:0009507">
    <property type="term" value="C:chloroplast"/>
    <property type="evidence" value="ECO:0000314"/>
    <property type="project" value="UniProtKB"/>
</dbReference>
<dbReference type="GO" id="GO:0034599">
    <property type="term" value="P:cellular response to oxidative stress"/>
    <property type="evidence" value="ECO:0007669"/>
    <property type="project" value="TreeGrafter"/>
</dbReference>
<dbReference type="GO" id="GO:0010150">
    <property type="term" value="P:leaf senescence"/>
    <property type="evidence" value="ECO:0000304"/>
    <property type="project" value="UniProtKB"/>
</dbReference>
<dbReference type="InterPro" id="IPR044973">
    <property type="entry name" value="AAF-like"/>
</dbReference>
<dbReference type="PANTHER" id="PTHR36725">
    <property type="entry name" value="SENESCENCE-ASSOCIATED PROTEIN AAF, CHLOROLPLASTIC"/>
    <property type="match status" value="1"/>
</dbReference>
<dbReference type="PANTHER" id="PTHR36725:SF1">
    <property type="entry name" value="SENESCENCE-ASSOCIATED PROTEIN AAF, CHLOROLPLASTIC"/>
    <property type="match status" value="1"/>
</dbReference>
<proteinExistence type="evidence at transcript level"/>